<reference key="1">
    <citation type="journal article" date="1991" name="Appl. Environ. Microbiol.">
        <title>Detection of luciferase gene sequence in nonluminescent Vibrio cholerae by colony hybridization and polymerase chain reaction.</title>
        <authorList>
            <person name="Palmer L.M."/>
            <person name="Colwell R.R."/>
        </authorList>
    </citation>
    <scope>NUCLEOTIDE SEQUENCE [GENOMIC DNA]</scope>
    <source>
        <strain>ATCC 14547 / LMG 4406 / NCIMB 41 / CIP 69.41</strain>
        <strain>UM4082</strain>
        <strain>UM4102</strain>
    </source>
</reference>
<accession>P24114</accession>
<comment type="function">
    <text evidence="2">Light-emitting reaction in luminous bacteria.</text>
</comment>
<comment type="catalytic activity">
    <reaction evidence="2">
        <text>a long-chain fatty aldehyde + FMNH2 + O2 = a long-chain fatty acid + hnu + FMN + H2O + 2 H(+)</text>
        <dbReference type="Rhea" id="RHEA:17181"/>
        <dbReference type="ChEBI" id="CHEBI:15377"/>
        <dbReference type="ChEBI" id="CHEBI:15378"/>
        <dbReference type="ChEBI" id="CHEBI:15379"/>
        <dbReference type="ChEBI" id="CHEBI:17176"/>
        <dbReference type="ChEBI" id="CHEBI:30212"/>
        <dbReference type="ChEBI" id="CHEBI:57560"/>
        <dbReference type="ChEBI" id="CHEBI:57618"/>
        <dbReference type="ChEBI" id="CHEBI:58210"/>
        <dbReference type="EC" id="1.14.14.3"/>
    </reaction>
</comment>
<comment type="subunit">
    <text evidence="1">Heterodimer of an alpha and a beta chain.</text>
</comment>
<comment type="miscellaneous">
    <text>The synthesis of this protein is regulated by a complex control mechanism that has been termed autoinduction. In fully induced cells luciferase comprises up to 5% of the soluble protein.</text>
</comment>
<comment type="miscellaneous">
    <text>Strain ATCC 14547 is luminescent.</text>
</comment>
<comment type="miscellaneous">
    <text>Strain UM4102 is dimly luminescent.</text>
</comment>
<comment type="miscellaneous">
    <text>Strain UM4082 is non-luminescent.</text>
</comment>
<dbReference type="EC" id="1.14.14.3" evidence="2"/>
<dbReference type="EMBL" id="M60437">
    <property type="protein sequence ID" value="AAA27532.1"/>
    <property type="molecule type" value="Genomic_DNA"/>
</dbReference>
<dbReference type="EMBL" id="M60438">
    <property type="protein sequence ID" value="AAA27533.1"/>
    <property type="molecule type" value="Genomic_DNA"/>
</dbReference>
<dbReference type="EMBL" id="M60439">
    <property type="protein sequence ID" value="AAA27534.1"/>
    <property type="molecule type" value="Genomic_DNA"/>
</dbReference>
<dbReference type="PIR" id="B49775">
    <property type="entry name" value="B49775"/>
</dbReference>
<dbReference type="PIR" id="C49775">
    <property type="entry name" value="C49775"/>
</dbReference>
<dbReference type="SMR" id="P24114"/>
<dbReference type="GO" id="GO:0047646">
    <property type="term" value="F:alkanal monooxygenase (FMN-linked) activity"/>
    <property type="evidence" value="ECO:0007669"/>
    <property type="project" value="UniProtKB-EC"/>
</dbReference>
<dbReference type="GO" id="GO:0008218">
    <property type="term" value="P:bioluminescence"/>
    <property type="evidence" value="ECO:0007669"/>
    <property type="project" value="UniProtKB-KW"/>
</dbReference>
<dbReference type="Gene3D" id="3.20.20.30">
    <property type="entry name" value="Luciferase-like domain"/>
    <property type="match status" value="1"/>
</dbReference>
<dbReference type="InterPro" id="IPR036661">
    <property type="entry name" value="Luciferase-like_sf"/>
</dbReference>
<dbReference type="InterPro" id="IPR002103">
    <property type="entry name" value="Luciferase_bac/NFP"/>
</dbReference>
<dbReference type="PRINTS" id="PR00089">
    <property type="entry name" value="LUCIFERASE"/>
</dbReference>
<dbReference type="SUPFAM" id="SSF51679">
    <property type="entry name" value="Bacterial luciferase-like"/>
    <property type="match status" value="1"/>
</dbReference>
<proteinExistence type="inferred from homology"/>
<name>LUXA_VIBCL</name>
<evidence type="ECO:0000250" key="1">
    <source>
        <dbReference type="UniProtKB" id="P07740"/>
    </source>
</evidence>
<evidence type="ECO:0000250" key="2">
    <source>
        <dbReference type="UniProtKB" id="P19839"/>
    </source>
</evidence>
<feature type="chain" id="PRO_0000220170" description="Alkanal monooxygenase alpha chain">
    <location>
        <begin position="1" status="less than"/>
        <end position="103" status="greater than"/>
    </location>
</feature>
<feature type="sequence variant" description="In strain: UM4082.">
    <original>Y</original>
    <variation>F</variation>
    <location>
        <position position="101"/>
    </location>
</feature>
<feature type="sequence variant" description="In strain: UM4102.">
    <original>Y</original>
    <variation>S</variation>
    <location>
        <position position="101"/>
    </location>
</feature>
<feature type="non-terminal residue">
    <location>
        <position position="1"/>
    </location>
</feature>
<feature type="non-terminal residue">
    <location>
        <position position="103"/>
    </location>
</feature>
<gene>
    <name type="primary">luxA</name>
</gene>
<keyword id="KW-0285">Flavoprotein</keyword>
<keyword id="KW-0288">FMN</keyword>
<keyword id="KW-0455">Luminescence</keyword>
<keyword id="KW-0503">Monooxygenase</keyword>
<keyword id="KW-0560">Oxidoreductase</keyword>
<keyword id="KW-0599">Photoprotein</keyword>
<protein>
    <recommendedName>
        <fullName>Alkanal monooxygenase alpha chain</fullName>
        <ecNumber evidence="2">1.14.14.3</ecNumber>
    </recommendedName>
    <alternativeName>
        <fullName>Bacterial luciferase alpha chain</fullName>
    </alternativeName>
</protein>
<organism>
    <name type="scientific">Vibrio cholerae</name>
    <dbReference type="NCBI Taxonomy" id="666"/>
    <lineage>
        <taxon>Bacteria</taxon>
        <taxon>Pseudomonadati</taxon>
        <taxon>Pseudomonadota</taxon>
        <taxon>Gammaproteobacteria</taxon>
        <taxon>Vibrionales</taxon>
        <taxon>Vibrionaceae</taxon>
        <taxon>Vibrio</taxon>
    </lineage>
</organism>
<sequence length="103" mass="12337">INTHEKKAQLDLYNEIALEHGHDIQNIDHCLSYITSVDHDSQRAKDICRQFLAHWYDSYVNATRIFDDSDQTKGYDFNKGQWRDFVLKGHRDTNRRIDYSYEI</sequence>